<name>YI9A_ECOLX</name>
<feature type="chain" id="PRO_0000075495" description="Insertion element IS1397 uncharacterized 20.1 kDa protein">
    <location>
        <begin position="1"/>
        <end position="173"/>
    </location>
</feature>
<feature type="region of interest" description="Disordered" evidence="1">
    <location>
        <begin position="115"/>
        <end position="135"/>
    </location>
</feature>
<evidence type="ECO:0000256" key="1">
    <source>
        <dbReference type="SAM" id="MobiDB-lite"/>
    </source>
</evidence>
<evidence type="ECO:0000305" key="2"/>
<organism>
    <name type="scientific">Escherichia coli</name>
    <dbReference type="NCBI Taxonomy" id="562"/>
    <lineage>
        <taxon>Bacteria</taxon>
        <taxon>Pseudomonadati</taxon>
        <taxon>Pseudomonadota</taxon>
        <taxon>Gammaproteobacteria</taxon>
        <taxon>Enterobacterales</taxon>
        <taxon>Enterobacteriaceae</taxon>
        <taxon>Escherichia</taxon>
    </lineage>
</organism>
<proteinExistence type="inferred from homology"/>
<reference key="1">
    <citation type="submission" date="1995-11" db="EMBL/GenBank/DDBJ databases">
        <authorList>
            <person name="Bachellier S."/>
            <person name="Clement J.M."/>
            <person name="Hofnung M."/>
            <person name="Gilson E."/>
        </authorList>
    </citation>
    <scope>NUCLEOTIDE SEQUENCE [GENOMIC DNA]</scope>
    <source>
        <strain>EPEC 25</strain>
    </source>
</reference>
<sequence>MKHSFEVKLAAVNHYLAGHAGIISTAKLFQLSHTSLSHWINLFLLHGPRALDCRHKRSYSPEDKLCVVLYALGHSESLPRVAARFNIPSHNTVKNWIKGYRKSGNEAFIRCRKEKSMTRSDDTHENEANMTPEEMKNELRYLRAENAYLKAMQEHLLEKKRQELEKKRKSSRA</sequence>
<keyword id="KW-0814">Transposable element</keyword>
<comment type="similarity">
    <text evidence="2">Belongs to the IS150/IS1296 orfA family.</text>
</comment>
<dbReference type="EMBL" id="X92970">
    <property type="protein sequence ID" value="CAA63546.1"/>
    <property type="molecule type" value="Genomic_DNA"/>
</dbReference>
<dbReference type="GO" id="GO:0043565">
    <property type="term" value="F:sequence-specific DNA binding"/>
    <property type="evidence" value="ECO:0007669"/>
    <property type="project" value="InterPro"/>
</dbReference>
<dbReference type="Gene3D" id="1.10.10.10">
    <property type="entry name" value="Winged helix-like DNA-binding domain superfamily/Winged helix DNA-binding domain"/>
    <property type="match status" value="1"/>
</dbReference>
<dbReference type="InterPro" id="IPR009057">
    <property type="entry name" value="Homeodomain-like_sf"/>
</dbReference>
<dbReference type="InterPro" id="IPR055247">
    <property type="entry name" value="InsJ-like_HTH"/>
</dbReference>
<dbReference type="InterPro" id="IPR052057">
    <property type="entry name" value="IS150/IS1296_orfA-like"/>
</dbReference>
<dbReference type="InterPro" id="IPR010921">
    <property type="entry name" value="Trp_repressor/repl_initiator"/>
</dbReference>
<dbReference type="InterPro" id="IPR036388">
    <property type="entry name" value="WH-like_DNA-bd_sf"/>
</dbReference>
<dbReference type="PANTHER" id="PTHR33795">
    <property type="entry name" value="INSERTION ELEMENT IS150 PROTEIN INSJ"/>
    <property type="match status" value="1"/>
</dbReference>
<dbReference type="PANTHER" id="PTHR33795:SF1">
    <property type="entry name" value="INSERTION ELEMENT IS150 PROTEIN INSJ"/>
    <property type="match status" value="1"/>
</dbReference>
<dbReference type="Pfam" id="PF13518">
    <property type="entry name" value="HTH_28"/>
    <property type="match status" value="2"/>
</dbReference>
<dbReference type="SUPFAM" id="SSF46689">
    <property type="entry name" value="Homeodomain-like"/>
    <property type="match status" value="1"/>
</dbReference>
<dbReference type="SUPFAM" id="SSF48295">
    <property type="entry name" value="TrpR-like"/>
    <property type="match status" value="1"/>
</dbReference>
<accession>Q47309</accession>
<protein>
    <recommendedName>
        <fullName>Insertion element IS1397 uncharacterized 20.1 kDa protein</fullName>
    </recommendedName>
    <alternativeName>
        <fullName>ORFA</fullName>
    </alternativeName>
</protein>